<organism>
    <name type="scientific">Streptococcus pneumoniae serotype 4 (strain ATCC BAA-334 / TIGR4)</name>
    <dbReference type="NCBI Taxonomy" id="170187"/>
    <lineage>
        <taxon>Bacteria</taxon>
        <taxon>Bacillati</taxon>
        <taxon>Bacillota</taxon>
        <taxon>Bacilli</taxon>
        <taxon>Lactobacillales</taxon>
        <taxon>Streptococcaceae</taxon>
        <taxon>Streptococcus</taxon>
    </lineage>
</organism>
<sequence>MILTVTMNPSIDISYPLDELKIDTVNRVVDVTKTAGGKGLNVTRVLSEFGDSVLATGLVGGKLGEFLVEHIDNQVKKDFFSIKGETRNCIAILHGDNQTEVLEKGPEVLEQEGQEFLEHFKKLLESVEVVAISGSLPAGLPVDYYASLVELANQAGKHVVLDCSGAALQAVLESPHKPTVIKPNNEELSQLLGREVSEDLDELKEVLQEPLFAGIEWIIVSLGANGTFAKHGDTFYKVDIPRIQVVNPVGSGDSTVAGISSGLLHKESDAELLIKANVLGMLNAQEKMTGHVNMANYQALYDQLIVKEV</sequence>
<name>LACC_STRPN</name>
<protein>
    <recommendedName>
        <fullName evidence="1">Tagatose-6-phosphate kinase</fullName>
        <ecNumber evidence="1">2.7.1.144</ecNumber>
    </recommendedName>
    <alternativeName>
        <fullName evidence="1">Phosphotagatokinase</fullName>
    </alternativeName>
</protein>
<dbReference type="EC" id="2.7.1.144" evidence="1"/>
<dbReference type="EMBL" id="AE005672">
    <property type="protein sequence ID" value="AAK75300.1"/>
    <property type="molecule type" value="Genomic_DNA"/>
</dbReference>
<dbReference type="PIR" id="C95138">
    <property type="entry name" value="C95138"/>
</dbReference>
<dbReference type="RefSeq" id="WP_000604264.1">
    <property type="nucleotide sequence ID" value="NC_003028.3"/>
</dbReference>
<dbReference type="SMR" id="Q97QL2"/>
<dbReference type="PaxDb" id="170187-SP_1191"/>
<dbReference type="EnsemblBacteria" id="AAK75300">
    <property type="protein sequence ID" value="AAK75300"/>
    <property type="gene ID" value="SP_1191"/>
</dbReference>
<dbReference type="KEGG" id="spn:SP_1191"/>
<dbReference type="eggNOG" id="COG1105">
    <property type="taxonomic scope" value="Bacteria"/>
</dbReference>
<dbReference type="PhylomeDB" id="Q97QL2"/>
<dbReference type="BioCyc" id="SPNE170187:G1FZB-1208-MONOMER"/>
<dbReference type="UniPathway" id="UPA00704">
    <property type="reaction ID" value="UER00715"/>
</dbReference>
<dbReference type="Proteomes" id="UP000000585">
    <property type="component" value="Chromosome"/>
</dbReference>
<dbReference type="GO" id="GO:0005829">
    <property type="term" value="C:cytosol"/>
    <property type="evidence" value="ECO:0007669"/>
    <property type="project" value="TreeGrafter"/>
</dbReference>
<dbReference type="GO" id="GO:0005524">
    <property type="term" value="F:ATP binding"/>
    <property type="evidence" value="ECO:0007669"/>
    <property type="project" value="UniProtKB-KW"/>
</dbReference>
<dbReference type="GO" id="GO:0008443">
    <property type="term" value="F:phosphofructokinase activity"/>
    <property type="evidence" value="ECO:0007669"/>
    <property type="project" value="TreeGrafter"/>
</dbReference>
<dbReference type="GO" id="GO:0009024">
    <property type="term" value="F:tagatose-6-phosphate kinase activity"/>
    <property type="evidence" value="ECO:0007669"/>
    <property type="project" value="UniProtKB-UniRule"/>
</dbReference>
<dbReference type="GO" id="GO:2001059">
    <property type="term" value="P:D-tagatose 6-phosphate catabolic process"/>
    <property type="evidence" value="ECO:0007669"/>
    <property type="project" value="UniProtKB-UniRule"/>
</dbReference>
<dbReference type="GO" id="GO:0019512">
    <property type="term" value="P:lactose catabolic process via tagatose-6-phosphate"/>
    <property type="evidence" value="ECO:0007669"/>
    <property type="project" value="InterPro"/>
</dbReference>
<dbReference type="CDD" id="cd01164">
    <property type="entry name" value="FruK_PfkB_like"/>
    <property type="match status" value="1"/>
</dbReference>
<dbReference type="FunFam" id="3.40.1190.20:FF:000001">
    <property type="entry name" value="Phosphofructokinase"/>
    <property type="match status" value="1"/>
</dbReference>
<dbReference type="Gene3D" id="3.40.1190.20">
    <property type="match status" value="1"/>
</dbReference>
<dbReference type="HAMAP" id="MF_01557">
    <property type="entry name" value="LacC"/>
    <property type="match status" value="1"/>
</dbReference>
<dbReference type="InterPro" id="IPR002173">
    <property type="entry name" value="Carboh/pur_kinase_PfkB_CS"/>
</dbReference>
<dbReference type="InterPro" id="IPR005926">
    <property type="entry name" value="LacC"/>
</dbReference>
<dbReference type="InterPro" id="IPR011611">
    <property type="entry name" value="PfkB_dom"/>
</dbReference>
<dbReference type="InterPro" id="IPR029056">
    <property type="entry name" value="Ribokinase-like"/>
</dbReference>
<dbReference type="InterPro" id="IPR017583">
    <property type="entry name" value="Tagatose/fructose_Pkinase"/>
</dbReference>
<dbReference type="NCBIfam" id="TIGR03168">
    <property type="entry name" value="1-PFK"/>
    <property type="match status" value="1"/>
</dbReference>
<dbReference type="NCBIfam" id="TIGR01231">
    <property type="entry name" value="lacC"/>
    <property type="match status" value="1"/>
</dbReference>
<dbReference type="NCBIfam" id="NF010033">
    <property type="entry name" value="PRK13508.1"/>
    <property type="match status" value="1"/>
</dbReference>
<dbReference type="PANTHER" id="PTHR46566:SF5">
    <property type="entry name" value="1-PHOSPHOFRUCTOKINASE"/>
    <property type="match status" value="1"/>
</dbReference>
<dbReference type="PANTHER" id="PTHR46566">
    <property type="entry name" value="1-PHOSPHOFRUCTOKINASE-RELATED"/>
    <property type="match status" value="1"/>
</dbReference>
<dbReference type="Pfam" id="PF00294">
    <property type="entry name" value="PfkB"/>
    <property type="match status" value="1"/>
</dbReference>
<dbReference type="PIRSF" id="PIRSF000535">
    <property type="entry name" value="1PFK/6PFK/LacC"/>
    <property type="match status" value="1"/>
</dbReference>
<dbReference type="SUPFAM" id="SSF53613">
    <property type="entry name" value="Ribokinase-like"/>
    <property type="match status" value="1"/>
</dbReference>
<dbReference type="PROSITE" id="PS00583">
    <property type="entry name" value="PFKB_KINASES_1"/>
    <property type="match status" value="1"/>
</dbReference>
<dbReference type="PROSITE" id="PS00584">
    <property type="entry name" value="PFKB_KINASES_2"/>
    <property type="match status" value="1"/>
</dbReference>
<comment type="catalytic activity">
    <reaction evidence="1">
        <text>D-tagatofuranose 6-phosphate + ATP = D-tagatofuranose 1,6-bisphosphate + ADP + H(+)</text>
        <dbReference type="Rhea" id="RHEA:12420"/>
        <dbReference type="ChEBI" id="CHEBI:15378"/>
        <dbReference type="ChEBI" id="CHEBI:30616"/>
        <dbReference type="ChEBI" id="CHEBI:58694"/>
        <dbReference type="ChEBI" id="CHEBI:58695"/>
        <dbReference type="ChEBI" id="CHEBI:456216"/>
        <dbReference type="EC" id="2.7.1.144"/>
    </reaction>
</comment>
<comment type="pathway">
    <text evidence="1">Carbohydrate metabolism; D-tagatose 6-phosphate degradation; D-glyceraldehyde 3-phosphate and glycerone phosphate from D-tagatose 6-phosphate: step 1/2.</text>
</comment>
<comment type="similarity">
    <text evidence="1">Belongs to the carbohydrate kinase PfkB family. LacC subfamily.</text>
</comment>
<reference key="1">
    <citation type="journal article" date="2001" name="Science">
        <title>Complete genome sequence of a virulent isolate of Streptococcus pneumoniae.</title>
        <authorList>
            <person name="Tettelin H."/>
            <person name="Nelson K.E."/>
            <person name="Paulsen I.T."/>
            <person name="Eisen J.A."/>
            <person name="Read T.D."/>
            <person name="Peterson S.N."/>
            <person name="Heidelberg J.F."/>
            <person name="DeBoy R.T."/>
            <person name="Haft D.H."/>
            <person name="Dodson R.J."/>
            <person name="Durkin A.S."/>
            <person name="Gwinn M.L."/>
            <person name="Kolonay J.F."/>
            <person name="Nelson W.C."/>
            <person name="Peterson J.D."/>
            <person name="Umayam L.A."/>
            <person name="White O."/>
            <person name="Salzberg S.L."/>
            <person name="Lewis M.R."/>
            <person name="Radune D."/>
            <person name="Holtzapple E.K."/>
            <person name="Khouri H.M."/>
            <person name="Wolf A.M."/>
            <person name="Utterback T.R."/>
            <person name="Hansen C.L."/>
            <person name="McDonald L.A."/>
            <person name="Feldblyum T.V."/>
            <person name="Angiuoli S.V."/>
            <person name="Dickinson T."/>
            <person name="Hickey E.K."/>
            <person name="Holt I.E."/>
            <person name="Loftus B.J."/>
            <person name="Yang F."/>
            <person name="Smith H.O."/>
            <person name="Venter J.C."/>
            <person name="Dougherty B.A."/>
            <person name="Morrison D.A."/>
            <person name="Hollingshead S.K."/>
            <person name="Fraser C.M."/>
        </authorList>
    </citation>
    <scope>NUCLEOTIDE SEQUENCE [LARGE SCALE GENOMIC DNA]</scope>
    <source>
        <strain>ATCC BAA-334 / TIGR4</strain>
    </source>
</reference>
<gene>
    <name evidence="1" type="primary">lacC</name>
    <name type="ordered locus">SP_1191</name>
</gene>
<evidence type="ECO:0000255" key="1">
    <source>
        <dbReference type="HAMAP-Rule" id="MF_01557"/>
    </source>
</evidence>
<accession>Q97QL2</accession>
<feature type="chain" id="PRO_0000203931" description="Tagatose-6-phosphate kinase">
    <location>
        <begin position="1"/>
        <end position="309"/>
    </location>
</feature>
<keyword id="KW-0067">ATP-binding</keyword>
<keyword id="KW-0418">Kinase</keyword>
<keyword id="KW-0423">Lactose metabolism</keyword>
<keyword id="KW-0547">Nucleotide-binding</keyword>
<keyword id="KW-1185">Reference proteome</keyword>
<keyword id="KW-0808">Transferase</keyword>
<proteinExistence type="inferred from homology"/>